<accession>O00444</accession>
<accession>B2RAL0</accession>
<accession>B7Z837</accession>
<accession>B7Z8G7</accession>
<accession>Q8IYF0</accession>
<accession>Q96Q95</accession>
<accession>Q9UD84</accession>
<accession>Q9UDE2</accession>
<proteinExistence type="evidence at protein level"/>
<name>PLK4_HUMAN</name>
<dbReference type="EC" id="2.7.11.21" evidence="10 14 15"/>
<dbReference type="EMBL" id="Y13115">
    <property type="protein sequence ID" value="CAA73575.1"/>
    <property type="molecule type" value="mRNA"/>
</dbReference>
<dbReference type="EMBL" id="AB006972">
    <property type="protein sequence ID" value="BAB69958.1"/>
    <property type="molecule type" value="mRNA"/>
</dbReference>
<dbReference type="EMBL" id="AK302858">
    <property type="protein sequence ID" value="BAH13823.1"/>
    <property type="molecule type" value="mRNA"/>
</dbReference>
<dbReference type="EMBL" id="AK303399">
    <property type="protein sequence ID" value="BAH13953.1"/>
    <property type="molecule type" value="mRNA"/>
</dbReference>
<dbReference type="EMBL" id="AK314238">
    <property type="protein sequence ID" value="BAG36907.1"/>
    <property type="molecule type" value="mRNA"/>
</dbReference>
<dbReference type="EMBL" id="BC036023">
    <property type="protein sequence ID" value="AAH36023.1"/>
    <property type="molecule type" value="mRNA"/>
</dbReference>
<dbReference type="CCDS" id="CCDS3735.1">
    <molecule id="O00444-1"/>
</dbReference>
<dbReference type="CCDS" id="CCDS54803.1">
    <molecule id="O00444-2"/>
</dbReference>
<dbReference type="CCDS" id="CCDS54804.1">
    <molecule id="O00444-3"/>
</dbReference>
<dbReference type="RefSeq" id="NP_001177728.1">
    <molecule id="O00444-2"/>
    <property type="nucleotide sequence ID" value="NM_001190799.2"/>
</dbReference>
<dbReference type="RefSeq" id="NP_001177730.1">
    <molecule id="O00444-3"/>
    <property type="nucleotide sequence ID" value="NM_001190801.2"/>
</dbReference>
<dbReference type="RefSeq" id="NP_055079.3">
    <molecule id="O00444-1"/>
    <property type="nucleotide sequence ID" value="NM_014264.4"/>
</dbReference>
<dbReference type="PDB" id="2N19">
    <property type="method" value="NMR"/>
    <property type="chains" value="A=884-970"/>
</dbReference>
<dbReference type="PDB" id="3COK">
    <property type="method" value="X-ray"/>
    <property type="resolution" value="2.25 A"/>
    <property type="chains" value="A/B=2-275"/>
</dbReference>
<dbReference type="PDB" id="4JXF">
    <property type="method" value="X-ray"/>
    <property type="resolution" value="2.40 A"/>
    <property type="chains" value="A=4-269"/>
</dbReference>
<dbReference type="PDB" id="4N7V">
    <property type="method" value="X-ray"/>
    <property type="resolution" value="2.76 A"/>
    <property type="chains" value="A/B=580-808"/>
</dbReference>
<dbReference type="PDB" id="4N7Z">
    <property type="method" value="X-ray"/>
    <property type="resolution" value="2.85 A"/>
    <property type="chains" value="A=580-808"/>
</dbReference>
<dbReference type="PDB" id="4N9J">
    <property type="method" value="X-ray"/>
    <property type="resolution" value="2.60 A"/>
    <property type="chains" value="A/B=581-808"/>
</dbReference>
<dbReference type="PDB" id="4YUR">
    <property type="method" value="X-ray"/>
    <property type="resolution" value="2.65 A"/>
    <property type="chains" value="A=2-275"/>
</dbReference>
<dbReference type="PDB" id="4YYP">
    <property type="method" value="X-ray"/>
    <property type="resolution" value="2.60 A"/>
    <property type="chains" value="A=884-970"/>
</dbReference>
<dbReference type="PDB" id="5LHY">
    <property type="method" value="X-ray"/>
    <property type="resolution" value="3.31 A"/>
    <property type="chains" value="1/2/3/4/5/6/7/8/9/A/B/C/D/E/F/G/H/I/J/K/L/M/N/O/P/Q/R/S/T/U=884-970"/>
</dbReference>
<dbReference type="PDB" id="5LHZ">
    <property type="method" value="X-ray"/>
    <property type="resolution" value="2.51 A"/>
    <property type="chains" value="A/B/C=884-970"/>
</dbReference>
<dbReference type="PDB" id="6N45">
    <property type="method" value="X-ray"/>
    <property type="resolution" value="2.64 A"/>
    <property type="chains" value="A/B=581-808"/>
</dbReference>
<dbReference type="PDB" id="6N46">
    <property type="method" value="X-ray"/>
    <property type="resolution" value="3.71 A"/>
    <property type="chains" value="A/B/C/D/E/F/G/H=581-808"/>
</dbReference>
<dbReference type="PDB" id="6W38">
    <property type="method" value="X-ray"/>
    <property type="resolution" value="4.48 A"/>
    <property type="chains" value="B=585-807"/>
</dbReference>
<dbReference type="PDB" id="6W3I">
    <property type="method" value="X-ray"/>
    <property type="resolution" value="3.80 A"/>
    <property type="chains" value="B=585-807"/>
</dbReference>
<dbReference type="PDB" id="6W3J">
    <property type="method" value="X-ray"/>
    <property type="resolution" value="4.38 A"/>
    <property type="chains" value="B=585-807"/>
</dbReference>
<dbReference type="PDB" id="8XPG">
    <property type="method" value="X-ray"/>
    <property type="resolution" value="2.70 A"/>
    <property type="chains" value="A/B=581-808"/>
</dbReference>
<dbReference type="PDBsum" id="2N19"/>
<dbReference type="PDBsum" id="3COK"/>
<dbReference type="PDBsum" id="4JXF"/>
<dbReference type="PDBsum" id="4N7V"/>
<dbReference type="PDBsum" id="4N7Z"/>
<dbReference type="PDBsum" id="4N9J"/>
<dbReference type="PDBsum" id="4YUR"/>
<dbReference type="PDBsum" id="4YYP"/>
<dbReference type="PDBsum" id="5LHY"/>
<dbReference type="PDBsum" id="5LHZ"/>
<dbReference type="PDBsum" id="6N45"/>
<dbReference type="PDBsum" id="6N46"/>
<dbReference type="PDBsum" id="6W38"/>
<dbReference type="PDBsum" id="6W3I"/>
<dbReference type="PDBsum" id="6W3J"/>
<dbReference type="PDBsum" id="8XPG"/>
<dbReference type="BMRB" id="O00444"/>
<dbReference type="SMR" id="O00444"/>
<dbReference type="BioGRID" id="115956">
    <property type="interactions" value="144"/>
</dbReference>
<dbReference type="ComplexPortal" id="CPX-1161">
    <property type="entry name" value="CEP192-PLK4 complex"/>
</dbReference>
<dbReference type="ComplexPortal" id="CPX-1299">
    <property type="entry name" value="CEP152-PLK4 complex"/>
</dbReference>
<dbReference type="CORUM" id="O00444"/>
<dbReference type="DIP" id="DIP-34467N"/>
<dbReference type="FunCoup" id="O00444">
    <property type="interactions" value="1726"/>
</dbReference>
<dbReference type="IntAct" id="O00444">
    <property type="interactions" value="63"/>
</dbReference>
<dbReference type="MINT" id="O00444"/>
<dbReference type="STRING" id="9606.ENSP00000270861"/>
<dbReference type="BindingDB" id="O00444"/>
<dbReference type="ChEMBL" id="CHEMBL3788"/>
<dbReference type="DrugBank" id="DB12010">
    <property type="generic name" value="Fostamatinib"/>
</dbReference>
<dbReference type="DrugCentral" id="O00444"/>
<dbReference type="GuidetoPHARMACOLOGY" id="2171"/>
<dbReference type="iPTMnet" id="O00444"/>
<dbReference type="PhosphoSitePlus" id="O00444"/>
<dbReference type="BioMuta" id="PLK4"/>
<dbReference type="CPTAC" id="CPTAC-3076"/>
<dbReference type="CPTAC" id="CPTAC-3077"/>
<dbReference type="jPOST" id="O00444"/>
<dbReference type="MassIVE" id="O00444"/>
<dbReference type="PaxDb" id="9606-ENSP00000270861"/>
<dbReference type="PeptideAtlas" id="O00444"/>
<dbReference type="ProteomicsDB" id="47893">
    <molecule id="O00444-1"/>
</dbReference>
<dbReference type="ProteomicsDB" id="47894">
    <molecule id="O00444-2"/>
</dbReference>
<dbReference type="ProteomicsDB" id="47895">
    <molecule id="O00444-3"/>
</dbReference>
<dbReference type="Antibodypedia" id="26934">
    <property type="antibodies" value="233 antibodies from 34 providers"/>
</dbReference>
<dbReference type="DNASU" id="10733"/>
<dbReference type="Ensembl" id="ENST00000270861.10">
    <molecule id="O00444-1"/>
    <property type="protein sequence ID" value="ENSP00000270861.5"/>
    <property type="gene ID" value="ENSG00000142731.11"/>
</dbReference>
<dbReference type="Ensembl" id="ENST00000513090.5">
    <molecule id="O00444-2"/>
    <property type="protein sequence ID" value="ENSP00000427554.1"/>
    <property type="gene ID" value="ENSG00000142731.11"/>
</dbReference>
<dbReference type="Ensembl" id="ENST00000514379.5">
    <molecule id="O00444-3"/>
    <property type="protein sequence ID" value="ENSP00000423582.1"/>
    <property type="gene ID" value="ENSG00000142731.11"/>
</dbReference>
<dbReference type="GeneID" id="10733"/>
<dbReference type="KEGG" id="hsa:10733"/>
<dbReference type="MANE-Select" id="ENST00000270861.10">
    <property type="protein sequence ID" value="ENSP00000270861.5"/>
    <property type="RefSeq nucleotide sequence ID" value="NM_014264.5"/>
    <property type="RefSeq protein sequence ID" value="NP_055079.3"/>
</dbReference>
<dbReference type="UCSC" id="uc003ifo.4">
    <molecule id="O00444-1"/>
    <property type="organism name" value="human"/>
</dbReference>
<dbReference type="AGR" id="HGNC:11397"/>
<dbReference type="CTD" id="10733"/>
<dbReference type="DisGeNET" id="10733"/>
<dbReference type="GeneCards" id="PLK4"/>
<dbReference type="HGNC" id="HGNC:11397">
    <property type="gene designation" value="PLK4"/>
</dbReference>
<dbReference type="HPA" id="ENSG00000142731">
    <property type="expression patterns" value="Group enriched (bone marrow, lymphoid tissue, testis)"/>
</dbReference>
<dbReference type="MalaCards" id="PLK4"/>
<dbReference type="MIM" id="605031">
    <property type="type" value="gene"/>
</dbReference>
<dbReference type="MIM" id="616171">
    <property type="type" value="phenotype"/>
</dbReference>
<dbReference type="neXtProt" id="NX_O00444"/>
<dbReference type="OpenTargets" id="ENSG00000142731"/>
<dbReference type="Orphanet" id="2518">
    <property type="disease" value="Autosomal recessive chorioretinopathy-microcephaly syndrome"/>
</dbReference>
<dbReference type="Orphanet" id="808">
    <property type="disease" value="Seckel syndrome"/>
</dbReference>
<dbReference type="PharmGKB" id="PA36205"/>
<dbReference type="VEuPathDB" id="HostDB:ENSG00000142731"/>
<dbReference type="eggNOG" id="KOG0575">
    <property type="taxonomic scope" value="Eukaryota"/>
</dbReference>
<dbReference type="GeneTree" id="ENSGT00940000156316"/>
<dbReference type="InParanoid" id="O00444"/>
<dbReference type="OMA" id="NIVERCH"/>
<dbReference type="OrthoDB" id="10004143at2759"/>
<dbReference type="PAN-GO" id="O00444">
    <property type="GO annotations" value="7 GO annotations based on evolutionary models"/>
</dbReference>
<dbReference type="PhylomeDB" id="O00444"/>
<dbReference type="TreeFam" id="TF101090"/>
<dbReference type="BRENDA" id="2.7.11.21">
    <property type="organism ID" value="2681"/>
</dbReference>
<dbReference type="PathwayCommons" id="O00444"/>
<dbReference type="Reactome" id="R-HSA-2565942">
    <property type="pathway name" value="Regulation of PLK1 Activity at G2/M Transition"/>
</dbReference>
<dbReference type="Reactome" id="R-HSA-380259">
    <property type="pathway name" value="Loss of Nlp from mitotic centrosomes"/>
</dbReference>
<dbReference type="Reactome" id="R-HSA-380270">
    <property type="pathway name" value="Recruitment of mitotic centrosome proteins and complexes"/>
</dbReference>
<dbReference type="Reactome" id="R-HSA-380284">
    <property type="pathway name" value="Loss of proteins required for interphase microtubule organization from the centrosome"/>
</dbReference>
<dbReference type="Reactome" id="R-HSA-380320">
    <property type="pathway name" value="Recruitment of NuMA to mitotic centrosomes"/>
</dbReference>
<dbReference type="Reactome" id="R-HSA-5620912">
    <property type="pathway name" value="Anchoring of the basal body to the plasma membrane"/>
</dbReference>
<dbReference type="Reactome" id="R-HSA-8854518">
    <property type="pathway name" value="AURKA Activation by TPX2"/>
</dbReference>
<dbReference type="SignaLink" id="O00444"/>
<dbReference type="SIGNOR" id="O00444"/>
<dbReference type="BioGRID-ORCS" id="10733">
    <property type="hits" value="761 hits in 1211 CRISPR screens"/>
</dbReference>
<dbReference type="CD-CODE" id="1DAEF59B">
    <property type="entry name" value="Pericentriolar matrix"/>
</dbReference>
<dbReference type="CD-CODE" id="2A09918C">
    <property type="entry name" value="Synthetic Condensate 000359"/>
</dbReference>
<dbReference type="CD-CODE" id="8C2F96ED">
    <property type="entry name" value="Centrosome"/>
</dbReference>
<dbReference type="CD-CODE" id="91857CE7">
    <property type="entry name" value="Nucleolus"/>
</dbReference>
<dbReference type="CD-CODE" id="FE3CB95B">
    <property type="entry name" value="Synthetic Condensate 000371"/>
</dbReference>
<dbReference type="EvolutionaryTrace" id="O00444"/>
<dbReference type="GeneWiki" id="PLK4"/>
<dbReference type="GenomeRNAi" id="10733"/>
<dbReference type="Pharos" id="O00444">
    <property type="development level" value="Tchem"/>
</dbReference>
<dbReference type="PRO" id="PR:O00444"/>
<dbReference type="Proteomes" id="UP000005640">
    <property type="component" value="Chromosome 4"/>
</dbReference>
<dbReference type="RNAct" id="O00444">
    <property type="molecule type" value="protein"/>
</dbReference>
<dbReference type="Bgee" id="ENSG00000142731">
    <property type="expression patterns" value="Expressed in ventricular zone and 124 other cell types or tissues"/>
</dbReference>
<dbReference type="ExpressionAtlas" id="O00444">
    <property type="expression patterns" value="baseline and differential"/>
</dbReference>
<dbReference type="GO" id="GO:0005814">
    <property type="term" value="C:centriole"/>
    <property type="evidence" value="ECO:0000314"/>
    <property type="project" value="UniProtKB"/>
</dbReference>
<dbReference type="GO" id="GO:0005813">
    <property type="term" value="C:centrosome"/>
    <property type="evidence" value="ECO:0000314"/>
    <property type="project" value="HPA"/>
</dbReference>
<dbReference type="GO" id="GO:0032154">
    <property type="term" value="C:cleavage furrow"/>
    <property type="evidence" value="ECO:0007669"/>
    <property type="project" value="UniProtKB-SubCell"/>
</dbReference>
<dbReference type="GO" id="GO:0005829">
    <property type="term" value="C:cytosol"/>
    <property type="evidence" value="ECO:0000314"/>
    <property type="project" value="HPA"/>
</dbReference>
<dbReference type="GO" id="GO:0098536">
    <property type="term" value="C:deuterosome"/>
    <property type="evidence" value="ECO:0000250"/>
    <property type="project" value="UniProtKB"/>
</dbReference>
<dbReference type="GO" id="GO:0005730">
    <property type="term" value="C:nucleolus"/>
    <property type="evidence" value="ECO:0000250"/>
    <property type="project" value="UniProtKB"/>
</dbReference>
<dbReference type="GO" id="GO:0005634">
    <property type="term" value="C:nucleus"/>
    <property type="evidence" value="ECO:0000318"/>
    <property type="project" value="GO_Central"/>
</dbReference>
<dbReference type="GO" id="GO:0120098">
    <property type="term" value="C:procentriole"/>
    <property type="evidence" value="ECO:0000314"/>
    <property type="project" value="ComplexPortal"/>
</dbReference>
<dbReference type="GO" id="GO:0120099">
    <property type="term" value="C:procentriole replication complex"/>
    <property type="evidence" value="ECO:0000353"/>
    <property type="project" value="ComplexPortal"/>
</dbReference>
<dbReference type="GO" id="GO:0001741">
    <property type="term" value="C:XY body"/>
    <property type="evidence" value="ECO:0007669"/>
    <property type="project" value="Ensembl"/>
</dbReference>
<dbReference type="GO" id="GO:0005524">
    <property type="term" value="F:ATP binding"/>
    <property type="evidence" value="ECO:0007669"/>
    <property type="project" value="UniProtKB-KW"/>
</dbReference>
<dbReference type="GO" id="GO:0042802">
    <property type="term" value="F:identical protein binding"/>
    <property type="evidence" value="ECO:0000353"/>
    <property type="project" value="IntAct"/>
</dbReference>
<dbReference type="GO" id="GO:0106310">
    <property type="term" value="F:protein serine kinase activity"/>
    <property type="evidence" value="ECO:0007669"/>
    <property type="project" value="RHEA"/>
</dbReference>
<dbReference type="GO" id="GO:0004674">
    <property type="term" value="F:protein serine/threonine kinase activity"/>
    <property type="evidence" value="ECO:0000314"/>
    <property type="project" value="UniProtKB"/>
</dbReference>
<dbReference type="GO" id="GO:0007099">
    <property type="term" value="P:centriole replication"/>
    <property type="evidence" value="ECO:0000314"/>
    <property type="project" value="ComplexPortal"/>
</dbReference>
<dbReference type="GO" id="GO:0060271">
    <property type="term" value="P:cilium assembly"/>
    <property type="evidence" value="ECO:0000315"/>
    <property type="project" value="UniProtKB"/>
</dbReference>
<dbReference type="GO" id="GO:0098535">
    <property type="term" value="P:de novo centriole assembly involved in multi-ciliated epithelial cell differentiation"/>
    <property type="evidence" value="ECO:0000250"/>
    <property type="project" value="UniProtKB"/>
</dbReference>
<dbReference type="GO" id="GO:0046601">
    <property type="term" value="P:positive regulation of centriole replication"/>
    <property type="evidence" value="ECO:0000314"/>
    <property type="project" value="UniProtKB"/>
</dbReference>
<dbReference type="GO" id="GO:0006468">
    <property type="term" value="P:protein phosphorylation"/>
    <property type="evidence" value="ECO:0000314"/>
    <property type="project" value="UniProtKB"/>
</dbReference>
<dbReference type="GO" id="GO:0060707">
    <property type="term" value="P:trophoblast giant cell differentiation"/>
    <property type="evidence" value="ECO:0000250"/>
    <property type="project" value="UniProtKB"/>
</dbReference>
<dbReference type="CDD" id="cd13114">
    <property type="entry name" value="POLO_box_Plk4_1"/>
    <property type="match status" value="1"/>
</dbReference>
<dbReference type="CDD" id="cd13115">
    <property type="entry name" value="POLO_box_Plk4_2"/>
    <property type="match status" value="1"/>
</dbReference>
<dbReference type="CDD" id="cd13116">
    <property type="entry name" value="POLO_box_Plk4_3"/>
    <property type="match status" value="1"/>
</dbReference>
<dbReference type="CDD" id="cd14186">
    <property type="entry name" value="STKc_PLK4"/>
    <property type="match status" value="1"/>
</dbReference>
<dbReference type="FunFam" id="3.30.200.20:FF:000221">
    <property type="entry name" value="Putative serine/threonine-protein kinase PLK4"/>
    <property type="match status" value="1"/>
</dbReference>
<dbReference type="FunFam" id="1.10.510.10:FF:000576">
    <property type="entry name" value="Serine/threonine-protein kinase PLK4"/>
    <property type="match status" value="1"/>
</dbReference>
<dbReference type="FunFam" id="2.40.50.930:FF:000001">
    <property type="entry name" value="Serine/threonine-protein kinase PLK4"/>
    <property type="match status" value="1"/>
</dbReference>
<dbReference type="FunFam" id="3.30.1120.130:FF:000001">
    <property type="entry name" value="serine/threonine-protein kinase PLK4 isoform X1"/>
    <property type="match status" value="1"/>
</dbReference>
<dbReference type="FunFam" id="3.30.1120.120:FF:000001">
    <property type="entry name" value="serine/threonine-protein kinase PLK4 isoform X2"/>
    <property type="match status" value="1"/>
</dbReference>
<dbReference type="Gene3D" id="2.40.50.930">
    <property type="match status" value="1"/>
</dbReference>
<dbReference type="Gene3D" id="3.30.1120.120">
    <property type="match status" value="1"/>
</dbReference>
<dbReference type="Gene3D" id="3.30.1120.130">
    <property type="match status" value="1"/>
</dbReference>
<dbReference type="Gene3D" id="3.30.200.20">
    <property type="entry name" value="Phosphorylase Kinase, domain 1"/>
    <property type="match status" value="1"/>
</dbReference>
<dbReference type="Gene3D" id="1.10.510.10">
    <property type="entry name" value="Transferase(Phosphotransferase) domain 1"/>
    <property type="match status" value="1"/>
</dbReference>
<dbReference type="InterPro" id="IPR011009">
    <property type="entry name" value="Kinase-like_dom_sf"/>
</dbReference>
<dbReference type="InterPro" id="IPR047108">
    <property type="entry name" value="Plk4-like_POLO_box_2_sf"/>
</dbReference>
<dbReference type="InterPro" id="IPR000959">
    <property type="entry name" value="POLO_box_dom"/>
</dbReference>
<dbReference type="InterPro" id="IPR033699">
    <property type="entry name" value="POLO_box_Plk4_1"/>
</dbReference>
<dbReference type="InterPro" id="IPR033698">
    <property type="entry name" value="POLO_box_Plk4_2"/>
</dbReference>
<dbReference type="InterPro" id="IPR033696">
    <property type="entry name" value="POLO_box_Plk4_C"/>
</dbReference>
<dbReference type="InterPro" id="IPR000719">
    <property type="entry name" value="Prot_kinase_dom"/>
</dbReference>
<dbReference type="InterPro" id="IPR017441">
    <property type="entry name" value="Protein_kinase_ATP_BS"/>
</dbReference>
<dbReference type="InterPro" id="IPR046437">
    <property type="entry name" value="Ser_Thr-PK_POLO_box_1_sf"/>
</dbReference>
<dbReference type="InterPro" id="IPR008266">
    <property type="entry name" value="Tyr_kinase_AS"/>
</dbReference>
<dbReference type="PANTHER" id="PTHR24345">
    <property type="entry name" value="SERINE/THREONINE-PROTEIN KINASE PLK"/>
    <property type="match status" value="1"/>
</dbReference>
<dbReference type="PANTHER" id="PTHR24345:SF89">
    <property type="entry name" value="SERINE_THREONINE-PROTEIN KINASE PLK4"/>
    <property type="match status" value="1"/>
</dbReference>
<dbReference type="Pfam" id="PF00069">
    <property type="entry name" value="Pkinase"/>
    <property type="match status" value="1"/>
</dbReference>
<dbReference type="Pfam" id="PF18190">
    <property type="entry name" value="Plk4_PB1"/>
    <property type="match status" value="1"/>
</dbReference>
<dbReference type="Pfam" id="PF18409">
    <property type="entry name" value="Plk4_PB2"/>
    <property type="match status" value="1"/>
</dbReference>
<dbReference type="SUPFAM" id="SSF82615">
    <property type="entry name" value="Polo-box domain"/>
    <property type="match status" value="1"/>
</dbReference>
<dbReference type="SUPFAM" id="SSF56112">
    <property type="entry name" value="Protein kinase-like (PK-like)"/>
    <property type="match status" value="1"/>
</dbReference>
<dbReference type="PROSITE" id="PS51984">
    <property type="entry name" value="CPB1"/>
    <property type="match status" value="1"/>
</dbReference>
<dbReference type="PROSITE" id="PS51985">
    <property type="entry name" value="CPB2"/>
    <property type="match status" value="1"/>
</dbReference>
<dbReference type="PROSITE" id="PS50078">
    <property type="entry name" value="POLO_BOX"/>
    <property type="match status" value="1"/>
</dbReference>
<dbReference type="PROSITE" id="PS00107">
    <property type="entry name" value="PROTEIN_KINASE_ATP"/>
    <property type="match status" value="1"/>
</dbReference>
<dbReference type="PROSITE" id="PS50011">
    <property type="entry name" value="PROTEIN_KINASE_DOM"/>
    <property type="match status" value="1"/>
</dbReference>
<feature type="chain" id="PRO_0000086567" description="Serine/threonine-protein kinase PLK4">
    <location>
        <begin position="1"/>
        <end position="970"/>
    </location>
</feature>
<feature type="domain" description="Protein kinase" evidence="3">
    <location>
        <begin position="12"/>
        <end position="265"/>
    </location>
</feature>
<feature type="domain" description="Cryptic POLO box 1 (CPB1)" evidence="4">
    <location>
        <begin position="586"/>
        <end position="699"/>
    </location>
</feature>
<feature type="domain" description="Cryptic POLO box 2 (CPB2)" evidence="5">
    <location>
        <begin position="700"/>
        <end position="813"/>
    </location>
</feature>
<feature type="domain" description="POLO box" evidence="2">
    <location>
        <begin position="886"/>
        <end position="964"/>
    </location>
</feature>
<feature type="region of interest" description="Disordered" evidence="6">
    <location>
        <begin position="323"/>
        <end position="458"/>
    </location>
</feature>
<feature type="region of interest" description="Disordered" evidence="6">
    <location>
        <begin position="497"/>
        <end position="538"/>
    </location>
</feature>
<feature type="region of interest" description="Disordered" evidence="6">
    <location>
        <begin position="808"/>
        <end position="828"/>
    </location>
</feature>
<feature type="compositionally biased region" description="Polar residues" evidence="6">
    <location>
        <begin position="328"/>
        <end position="356"/>
    </location>
</feature>
<feature type="compositionally biased region" description="Basic and acidic residues" evidence="6">
    <location>
        <begin position="360"/>
        <end position="369"/>
    </location>
</feature>
<feature type="compositionally biased region" description="Polar residues" evidence="6">
    <location>
        <begin position="379"/>
        <end position="393"/>
    </location>
</feature>
<feature type="compositionally biased region" description="Polar residues" evidence="6">
    <location>
        <begin position="438"/>
        <end position="454"/>
    </location>
</feature>
<feature type="compositionally biased region" description="Basic and acidic residues" evidence="6">
    <location>
        <begin position="504"/>
        <end position="515"/>
    </location>
</feature>
<feature type="active site" description="Proton acceptor" evidence="3">
    <location>
        <position position="136"/>
    </location>
</feature>
<feature type="binding site" evidence="3">
    <location>
        <begin position="18"/>
        <end position="26"/>
    </location>
    <ligand>
        <name>ATP</name>
        <dbReference type="ChEBI" id="CHEBI:30616"/>
    </ligand>
</feature>
<feature type="binding site" evidence="30">
    <location>
        <position position="41"/>
    </location>
    <ligand>
        <name>ATP</name>
        <dbReference type="ChEBI" id="CHEBI:30616"/>
    </ligand>
</feature>
<feature type="modified residue" description="N6-acetyllysine" evidence="23">
    <location>
        <position position="45"/>
    </location>
</feature>
<feature type="modified residue" description="N6-acetyllysine" evidence="23">
    <location>
        <position position="46"/>
    </location>
</feature>
<feature type="modified residue" description="Phosphoserine" evidence="35 36">
    <location>
        <position position="401"/>
    </location>
</feature>
<feature type="modified residue" description="Phosphoserine" evidence="37">
    <location>
        <position position="665"/>
    </location>
</feature>
<feature type="modified residue" description="Phosphoserine" evidence="36">
    <location>
        <position position="817"/>
    </location>
</feature>
<feature type="splice variant" id="VSP_038116" description="In isoform 3." evidence="29">
    <location>
        <begin position="1"/>
        <end position="41"/>
    </location>
</feature>
<feature type="splice variant" id="VSP_038117" description="In isoform 2." evidence="29">
    <location>
        <begin position="43"/>
        <end position="74"/>
    </location>
</feature>
<feature type="sequence variant" id="VAR_041027" description="In dbSNP:rs34156294." evidence="12">
    <original>Y</original>
    <variation>C</variation>
    <location>
        <position position="86"/>
    </location>
</feature>
<feature type="sequence variant" id="VAR_041028" description="In dbSNP:rs35232579." evidence="12">
    <original>R</original>
    <variation>H</variation>
    <location>
        <position position="146"/>
    </location>
</feature>
<feature type="sequence variant" id="VAR_041029" description="In dbSNP:rs35448573." evidence="12">
    <original>A</original>
    <variation>T</variation>
    <location>
        <position position="226"/>
    </location>
</feature>
<feature type="sequence variant" id="VAR_019632" description="In dbSNP:rs3811740." evidence="7 8 12 28">
    <original>S</original>
    <variation>T</variation>
    <location>
        <position position="232"/>
    </location>
</feature>
<feature type="sequence variant" id="VAR_041030" description="In dbSNP:rs35049837." evidence="12">
    <original>P</original>
    <variation>L</variation>
    <location>
        <position position="317"/>
    </location>
</feature>
<feature type="sequence variant" id="VAR_041031" description="In dbSNP:rs34906574." evidence="12">
    <original>N</original>
    <variation>D</variation>
    <location>
        <position position="449"/>
    </location>
</feature>
<feature type="sequence variant" id="VAR_041032" description="In dbSNP:rs56043017." evidence="12">
    <original>W</original>
    <variation>S</variation>
    <location>
        <position position="519"/>
    </location>
</feature>
<feature type="sequence variant" id="VAR_041033" description="In dbSNP:rs17012739." evidence="7 8 12 28">
    <original>E</original>
    <variation>D</variation>
    <location>
        <position position="830"/>
    </location>
</feature>
<feature type="mutagenesis site" description="Does not affect interaction with UBP54." evidence="27">
    <original>K</original>
    <variation>R</variation>
    <location>
        <position position="13"/>
    </location>
</feature>
<feature type="mutagenesis site" description="Abolishes ability to phosphorylate CDC25C and CHEK2." evidence="14 15">
    <original>K</original>
    <variation>M</variation>
    <location>
        <position position="41"/>
    </location>
</feature>
<feature type="mutagenesis site" description="Does not affect interaction with UBP54." evidence="27">
    <original>K</original>
    <variation>R</variation>
    <location>
        <position position="151"/>
    </location>
</feature>
<feature type="mutagenesis site" description="Catalytically inactive mutant that causes some centrosome amplification above background levels when overexpressed." evidence="10">
    <original>D</original>
    <variation>A</variation>
    <location>
        <position position="154"/>
    </location>
</feature>
<feature type="mutagenesis site" description="Abolishes interaction with UBP54." evidence="27">
    <original>K</original>
    <variation>R</variation>
    <location>
        <position position="162"/>
    </location>
</feature>
<feature type="mutagenesis site" description="Does not affect interaction with UBP54." evidence="27">
    <original>K</original>
    <variation>R</variation>
    <location>
        <position position="167"/>
    </location>
</feature>
<feature type="mutagenesis site" description="Activating mutant." evidence="14 15">
    <original>T</original>
    <variation>D</variation>
    <location>
        <position position="170"/>
    </location>
</feature>
<feature type="mutagenesis site" description="Does not affect the interaction with TENT5C." evidence="26">
    <original>N</original>
    <variation>R</variation>
    <location>
        <position position="669"/>
    </location>
</feature>
<feature type="mutagenesis site" description="Decreases substantially the interaction with TENT5C. Does not affect localization to the centrosome. Loss of TENT5C recruitment to the centrosome." evidence="26">
    <original>I</original>
    <variation>P</variation>
    <location>
        <position position="670"/>
    </location>
</feature>
<feature type="sequence conflict" description="In Ref. 2; BAB69958." evidence="30" ref="2">
    <original>T</original>
    <variation>S</variation>
    <location>
        <position position="34"/>
    </location>
</feature>
<feature type="sequence conflict" description="In Ref. 1; CAA73575." evidence="30" ref="1">
    <original>Q</original>
    <variation>K</variation>
    <location>
        <position position="58"/>
    </location>
</feature>
<feature type="sequence conflict" description="In Ref. 3; BAH13823." evidence="30" ref="3">
    <original>D</original>
    <variation>N</variation>
    <location>
        <position position="333"/>
    </location>
</feature>
<feature type="sequence conflict" description="In Ref. 2; BAB69958." evidence="30" ref="2">
    <original>S</original>
    <variation>R</variation>
    <location>
        <position position="387"/>
    </location>
</feature>
<feature type="sequence conflict" description="In Ref. 3; BAH13823." evidence="30" ref="3">
    <original>F</original>
    <variation>S</variation>
    <location>
        <position position="692"/>
    </location>
</feature>
<feature type="sequence conflict" description="In Ref. 2; BAB69958." evidence="30" ref="2">
    <original>V</original>
    <variation>L</variation>
    <location>
        <position position="696"/>
    </location>
</feature>
<feature type="sequence conflict" description="In Ref. 1; CAA73575." evidence="30" ref="1">
    <original>Y</original>
    <variation>F</variation>
    <location>
        <position position="768"/>
    </location>
</feature>
<feature type="sequence conflict" description="In Ref. 2; BAB69958." evidence="30" ref="2">
    <original>A</original>
    <variation>D</variation>
    <location>
        <position position="842"/>
    </location>
</feature>
<feature type="helix" evidence="39">
    <location>
        <begin position="2"/>
        <end position="5"/>
    </location>
</feature>
<feature type="helix" evidence="39">
    <location>
        <begin position="9"/>
        <end position="11"/>
    </location>
</feature>
<feature type="strand" evidence="39">
    <location>
        <begin position="12"/>
        <end position="20"/>
    </location>
</feature>
<feature type="strand" evidence="39">
    <location>
        <begin position="22"/>
        <end position="31"/>
    </location>
</feature>
<feature type="turn" evidence="39">
    <location>
        <begin position="32"/>
        <end position="34"/>
    </location>
</feature>
<feature type="strand" evidence="39">
    <location>
        <begin position="37"/>
        <end position="44"/>
    </location>
</feature>
<feature type="helix" evidence="39">
    <location>
        <begin position="45"/>
        <end position="50"/>
    </location>
</feature>
<feature type="helix" evidence="39">
    <location>
        <begin position="54"/>
        <end position="64"/>
    </location>
</feature>
<feature type="strand" evidence="39">
    <location>
        <begin position="75"/>
        <end position="80"/>
    </location>
</feature>
<feature type="strand" evidence="39">
    <location>
        <begin position="82"/>
        <end position="90"/>
    </location>
</feature>
<feature type="helix" evidence="39">
    <location>
        <begin position="97"/>
        <end position="102"/>
    </location>
</feature>
<feature type="strand" evidence="40">
    <location>
        <begin position="104"/>
        <end position="106"/>
    </location>
</feature>
<feature type="helix" evidence="39">
    <location>
        <begin position="110"/>
        <end position="129"/>
    </location>
</feature>
<feature type="helix" evidence="39">
    <location>
        <begin position="139"/>
        <end position="141"/>
    </location>
</feature>
<feature type="strand" evidence="39">
    <location>
        <begin position="142"/>
        <end position="144"/>
    </location>
</feature>
<feature type="strand" evidence="39">
    <location>
        <begin position="150"/>
        <end position="152"/>
    </location>
</feature>
<feature type="turn" evidence="40">
    <location>
        <begin position="158"/>
        <end position="161"/>
    </location>
</feature>
<feature type="helix" evidence="39">
    <location>
        <begin position="193"/>
        <end position="206"/>
    </location>
</feature>
<feature type="helix" evidence="40">
    <location>
        <begin position="217"/>
        <end position="225"/>
    </location>
</feature>
<feature type="helix" evidence="39">
    <location>
        <begin position="236"/>
        <end position="245"/>
    </location>
</feature>
<feature type="helix" evidence="39">
    <location>
        <begin position="250"/>
        <end position="252"/>
    </location>
</feature>
<feature type="helix" evidence="39">
    <location>
        <begin position="256"/>
        <end position="259"/>
    </location>
</feature>
<feature type="turn" evidence="39">
    <location>
        <begin position="263"/>
        <end position="265"/>
    </location>
</feature>
<feature type="helix" evidence="41">
    <location>
        <begin position="587"/>
        <end position="590"/>
    </location>
</feature>
<feature type="strand" evidence="41">
    <location>
        <begin position="602"/>
        <end position="605"/>
    </location>
</feature>
<feature type="strand" evidence="41">
    <location>
        <begin position="607"/>
        <end position="613"/>
    </location>
</feature>
<feature type="strand" evidence="41">
    <location>
        <begin position="619"/>
        <end position="627"/>
    </location>
</feature>
<feature type="strand" evidence="41">
    <location>
        <begin position="630"/>
        <end position="639"/>
    </location>
</feature>
<feature type="strand" evidence="41">
    <location>
        <begin position="645"/>
        <end position="649"/>
    </location>
</feature>
<feature type="helix" evidence="41">
    <location>
        <begin position="651"/>
        <end position="654"/>
    </location>
</feature>
<feature type="strand" evidence="41">
    <location>
        <begin position="671"/>
        <end position="674"/>
    </location>
</feature>
<feature type="helix" evidence="41">
    <location>
        <begin position="675"/>
        <end position="677"/>
    </location>
</feature>
<feature type="helix" evidence="41">
    <location>
        <begin position="680"/>
        <end position="682"/>
    </location>
</feature>
<feature type="helix" evidence="41">
    <location>
        <begin position="683"/>
        <end position="698"/>
    </location>
</feature>
<feature type="strand" evidence="41">
    <location>
        <begin position="700"/>
        <end position="706"/>
    </location>
</feature>
<feature type="strand" evidence="41">
    <location>
        <begin position="708"/>
        <end position="716"/>
    </location>
</feature>
<feature type="strand" evidence="41">
    <location>
        <begin position="723"/>
        <end position="727"/>
    </location>
</feature>
<feature type="strand" evidence="41">
    <location>
        <begin position="732"/>
        <end position="735"/>
    </location>
</feature>
<feature type="strand" evidence="41">
    <location>
        <begin position="740"/>
        <end position="743"/>
    </location>
</feature>
<feature type="strand" evidence="41">
    <location>
        <begin position="749"/>
        <end position="752"/>
    </location>
</feature>
<feature type="helix" evidence="41">
    <location>
        <begin position="755"/>
        <end position="759"/>
    </location>
</feature>
<feature type="helix" evidence="41">
    <location>
        <begin position="765"/>
        <end position="793"/>
    </location>
</feature>
<feature type="strand" evidence="41">
    <location>
        <begin position="800"/>
        <end position="804"/>
    </location>
</feature>
<feature type="strand" evidence="42">
    <location>
        <begin position="887"/>
        <end position="893"/>
    </location>
</feature>
<feature type="turn" evidence="42">
    <location>
        <begin position="894"/>
        <end position="896"/>
    </location>
</feature>
<feature type="strand" evidence="42">
    <location>
        <begin position="897"/>
        <end position="902"/>
    </location>
</feature>
<feature type="strand" evidence="42">
    <location>
        <begin position="905"/>
        <end position="911"/>
    </location>
</feature>
<feature type="strand" evidence="42">
    <location>
        <begin position="916"/>
        <end position="922"/>
    </location>
</feature>
<feature type="strand" evidence="42">
    <location>
        <begin position="924"/>
        <end position="929"/>
    </location>
</feature>
<feature type="turn" evidence="38">
    <location>
        <begin position="931"/>
        <end position="933"/>
    </location>
</feature>
<feature type="strand" evidence="42">
    <location>
        <begin position="935"/>
        <end position="939"/>
    </location>
</feature>
<feature type="helix" evidence="42">
    <location>
        <begin position="946"/>
        <end position="961"/>
    </location>
</feature>
<keyword id="KW-0002">3D-structure</keyword>
<keyword id="KW-0007">Acetylation</keyword>
<keyword id="KW-0025">Alternative splicing</keyword>
<keyword id="KW-0067">ATP-binding</keyword>
<keyword id="KW-0963">Cytoplasm</keyword>
<keyword id="KW-0206">Cytoskeleton</keyword>
<keyword id="KW-0242">Dwarfism</keyword>
<keyword id="KW-0418">Kinase</keyword>
<keyword id="KW-0547">Nucleotide-binding</keyword>
<keyword id="KW-0539">Nucleus</keyword>
<keyword id="KW-0597">Phosphoprotein</keyword>
<keyword id="KW-1267">Proteomics identification</keyword>
<keyword id="KW-1185">Reference proteome</keyword>
<keyword id="KW-0723">Serine/threonine-protein kinase</keyword>
<keyword id="KW-0808">Transferase</keyword>
<keyword id="KW-0832">Ubl conjugation</keyword>
<sequence length="970" mass="108972">MATCIGEKIEDFKVGNLLGKGSFAGVYRAESIHTGLEVAIKMIDKKAMYKAGMVQRVQNEVKIHCQLKHPSILELYNYFEDSNYVYLVLEMCHNGEMNRYLKNRVKPFSENEARHFMHQIITGMLYLHSHGILHRDLTLSNLLLTRNMNIKIADFGLATQLKMPHEKHYTLCGTPNYISPEIATRSAHGLESDVWSLGCMFYTLLIGRPPFDTDTVKNTLNKVVLADYEMPSFLSIEAKDLIHQLLRRNPADRLSLSSVLDHPFMSRNSSTKSKDLGTVEDSIDSGHATISTAITASSSTSISGSLFDKRRLLIGQPLPNKMTVFPKNKSSTDFSSSGDGNSFYTQWGNQETSNSGRGRVIQDAEERPHSRYLRRAYSSDRSGTSNSQSQAKTYTMERCHSAEMLSVSKRSGGGENEERYSPTDNNANIFNFFKEKTSSSSGSFERPDNNQALSNHLCPGKTPFPFADPTPQTETVQQWFGNLQINAHLRKTTEYDSISPNRDFQGHPDLQKDTSKNAWTDTKVKKNSDASDNAHSVKQQNTMKYMTALHSKPEIIQQECVFGSDPLSEQSKTRGMEPPWGYQNRTLRSITSPLVAHRLKPIRQKTKKAVVSILDSEEVCVELVKEYASQEYVKEVLQISSDGNTITIYYPNGGRGFPLADRPPSPTDNISRYSFDNLPEKYWRKYQYASRFVQLVRSKSPKITYFTRYAKCILMENSPGADFEVWFYDGVKIHKTEDFIQVIEKTGKSYTLKSESEVNSLKEEIKMYMDHANEGHRICLALESIISEEERKTRSAPFFPIIIGRKPGSTSSPKALSPPPSVDSNYPTRERASFNRMVMHSAASPTQAPILNPSMVTNEGLGLTTTASGTDISSNSLKDCLPKSAQLLKSVFVKNVGWATQLTSGAVWVQFNDGSQLVVQAGVSSISYTSPNGQTTRYGENEKLPDYIKQKLQCLSSILLMFSNPTPNFH</sequence>
<reference key="1">
    <citation type="journal article" date="1997" name="Oncol. Rep.">
        <title>Human SAK related to the PLK/polo family of cell cycle kinases shows high mRNA expression in testis.</title>
        <authorList>
            <person name="Karn T."/>
            <person name="Holtrich U."/>
            <person name="Wolf G."/>
            <person name="Hock B."/>
            <person name="Strebhardt K."/>
            <person name="Ruebsamen-Waigmann H."/>
        </authorList>
    </citation>
    <scope>NUCLEOTIDE SEQUENCE [MRNA] (ISOFORM 1)</scope>
    <scope>VARIANTS THR-232 AND ASP-830</scope>
    <source>
        <tissue>Lung</tissue>
    </source>
</reference>
<reference key="2">
    <citation type="journal article" date="2001" name="J. Biol. Chem.">
        <title>Sak serine-threonine kinase acts as an effector of Tec tyrosine kinase.</title>
        <authorList>
            <person name="Yamashita Y."/>
            <person name="Kajigaya S."/>
            <person name="Yoshida K."/>
            <person name="Ueno S."/>
            <person name="Ota J."/>
            <person name="Ohmine K."/>
            <person name="Ueda M."/>
            <person name="Miyazato A."/>
            <person name="Ohya K."/>
            <person name="Kitamura T."/>
            <person name="Ozawa K."/>
            <person name="Mano H."/>
        </authorList>
    </citation>
    <scope>NUCLEOTIDE SEQUENCE [MRNA] (ISOFORM 1)</scope>
    <scope>PHOSPHORYLATION BY TEC</scope>
    <scope>VARIANTS THR-232 AND ASP-830</scope>
    <source>
        <tissue>Blood</tissue>
    </source>
</reference>
<reference key="3">
    <citation type="journal article" date="2004" name="Nat. Genet.">
        <title>Complete sequencing and characterization of 21,243 full-length human cDNAs.</title>
        <authorList>
            <person name="Ota T."/>
            <person name="Suzuki Y."/>
            <person name="Nishikawa T."/>
            <person name="Otsuki T."/>
            <person name="Sugiyama T."/>
            <person name="Irie R."/>
            <person name="Wakamatsu A."/>
            <person name="Hayashi K."/>
            <person name="Sato H."/>
            <person name="Nagai K."/>
            <person name="Kimura K."/>
            <person name="Makita H."/>
            <person name="Sekine M."/>
            <person name="Obayashi M."/>
            <person name="Nishi T."/>
            <person name="Shibahara T."/>
            <person name="Tanaka T."/>
            <person name="Ishii S."/>
            <person name="Yamamoto J."/>
            <person name="Saito K."/>
            <person name="Kawai Y."/>
            <person name="Isono Y."/>
            <person name="Nakamura Y."/>
            <person name="Nagahari K."/>
            <person name="Murakami K."/>
            <person name="Yasuda T."/>
            <person name="Iwayanagi T."/>
            <person name="Wagatsuma M."/>
            <person name="Shiratori A."/>
            <person name="Sudo H."/>
            <person name="Hosoiri T."/>
            <person name="Kaku Y."/>
            <person name="Kodaira H."/>
            <person name="Kondo H."/>
            <person name="Sugawara M."/>
            <person name="Takahashi M."/>
            <person name="Kanda K."/>
            <person name="Yokoi T."/>
            <person name="Furuya T."/>
            <person name="Kikkawa E."/>
            <person name="Omura Y."/>
            <person name="Abe K."/>
            <person name="Kamihara K."/>
            <person name="Katsuta N."/>
            <person name="Sato K."/>
            <person name="Tanikawa M."/>
            <person name="Yamazaki M."/>
            <person name="Ninomiya K."/>
            <person name="Ishibashi T."/>
            <person name="Yamashita H."/>
            <person name="Murakawa K."/>
            <person name="Fujimori K."/>
            <person name="Tanai H."/>
            <person name="Kimata M."/>
            <person name="Watanabe M."/>
            <person name="Hiraoka S."/>
            <person name="Chiba Y."/>
            <person name="Ishida S."/>
            <person name="Ono Y."/>
            <person name="Takiguchi S."/>
            <person name="Watanabe S."/>
            <person name="Yosida M."/>
            <person name="Hotuta T."/>
            <person name="Kusano J."/>
            <person name="Kanehori K."/>
            <person name="Takahashi-Fujii A."/>
            <person name="Hara H."/>
            <person name="Tanase T.-O."/>
            <person name="Nomura Y."/>
            <person name="Togiya S."/>
            <person name="Komai F."/>
            <person name="Hara R."/>
            <person name="Takeuchi K."/>
            <person name="Arita M."/>
            <person name="Imose N."/>
            <person name="Musashino K."/>
            <person name="Yuuki H."/>
            <person name="Oshima A."/>
            <person name="Sasaki N."/>
            <person name="Aotsuka S."/>
            <person name="Yoshikawa Y."/>
            <person name="Matsunawa H."/>
            <person name="Ichihara T."/>
            <person name="Shiohata N."/>
            <person name="Sano S."/>
            <person name="Moriya S."/>
            <person name="Momiyama H."/>
            <person name="Satoh N."/>
            <person name="Takami S."/>
            <person name="Terashima Y."/>
            <person name="Suzuki O."/>
            <person name="Nakagawa S."/>
            <person name="Senoh A."/>
            <person name="Mizoguchi H."/>
            <person name="Goto Y."/>
            <person name="Shimizu F."/>
            <person name="Wakebe H."/>
            <person name="Hishigaki H."/>
            <person name="Watanabe T."/>
            <person name="Sugiyama A."/>
            <person name="Takemoto M."/>
            <person name="Kawakami B."/>
            <person name="Yamazaki M."/>
            <person name="Watanabe K."/>
            <person name="Kumagai A."/>
            <person name="Itakura S."/>
            <person name="Fukuzumi Y."/>
            <person name="Fujimori Y."/>
            <person name="Komiyama M."/>
            <person name="Tashiro H."/>
            <person name="Tanigami A."/>
            <person name="Fujiwara T."/>
            <person name="Ono T."/>
            <person name="Yamada K."/>
            <person name="Fujii Y."/>
            <person name="Ozaki K."/>
            <person name="Hirao M."/>
            <person name="Ohmori Y."/>
            <person name="Kawabata A."/>
            <person name="Hikiji T."/>
            <person name="Kobatake N."/>
            <person name="Inagaki H."/>
            <person name="Ikema Y."/>
            <person name="Okamoto S."/>
            <person name="Okitani R."/>
            <person name="Kawakami T."/>
            <person name="Noguchi S."/>
            <person name="Itoh T."/>
            <person name="Shigeta K."/>
            <person name="Senba T."/>
            <person name="Matsumura K."/>
            <person name="Nakajima Y."/>
            <person name="Mizuno T."/>
            <person name="Morinaga M."/>
            <person name="Sasaki M."/>
            <person name="Togashi T."/>
            <person name="Oyama M."/>
            <person name="Hata H."/>
            <person name="Watanabe M."/>
            <person name="Komatsu T."/>
            <person name="Mizushima-Sugano J."/>
            <person name="Satoh T."/>
            <person name="Shirai Y."/>
            <person name="Takahashi Y."/>
            <person name="Nakagawa K."/>
            <person name="Okumura K."/>
            <person name="Nagase T."/>
            <person name="Nomura N."/>
            <person name="Kikuchi H."/>
            <person name="Masuho Y."/>
            <person name="Yamashita R."/>
            <person name="Nakai K."/>
            <person name="Yada T."/>
            <person name="Nakamura Y."/>
            <person name="Ohara O."/>
            <person name="Isogai T."/>
            <person name="Sugano S."/>
        </authorList>
    </citation>
    <scope>NUCLEOTIDE SEQUENCE [LARGE SCALE MRNA] (ISOFORMS 1; 2 AND 3)</scope>
    <scope>VARIANTS THR-232 AND ASP-830</scope>
    <source>
        <tissue>Testis</tissue>
        <tissue>Thymus</tissue>
    </source>
</reference>
<reference key="4">
    <citation type="journal article" date="2004" name="Genome Res.">
        <title>The status, quality, and expansion of the NIH full-length cDNA project: the Mammalian Gene Collection (MGC).</title>
        <authorList>
            <consortium name="The MGC Project Team"/>
        </authorList>
    </citation>
    <scope>NUCLEOTIDE SEQUENCE [LARGE SCALE MRNA] (ISOFORM 1)</scope>
    <source>
        <tissue>Testis</tissue>
    </source>
</reference>
<reference key="5">
    <citation type="journal article" date="1993" name="Semin. Immunol.">
        <title>Transmembrane signaling by the interleukin-2 receptor: progress and conundrums.</title>
        <authorList>
            <person name="Mills G.B."/>
            <person name="Schmandt R."/>
            <person name="Gibson S."/>
            <person name="Leung B."/>
            <person name="Hill M."/>
            <person name="May C."/>
            <person name="Shi Y.F."/>
            <person name="Branch D.R."/>
            <person name="Radvanyi L."/>
            <person name="Truitt K.E."/>
            <person name="Imboden J."/>
        </authorList>
    </citation>
    <scope>NUCLEOTIDE SEQUENCE [MRNA] OF 134-196</scope>
</reference>
<reference key="6">
    <citation type="journal article" date="1992" name="Int. J. Cancer">
        <title>Analysis of tyrosine kinase mRNAs including four FGF receptor mRNAs expressed in MCF-7 breast-cancer cells.</title>
        <authorList>
            <person name="Lehtola L."/>
            <person name="Partanen J."/>
            <person name="Sistonen L."/>
            <person name="Korhonen J."/>
            <person name="Warri A."/>
            <person name="Harkonen P."/>
            <person name="Clarke R."/>
            <person name="Alitalo K."/>
        </authorList>
    </citation>
    <scope>NUCLEOTIDE SEQUENCE [MRNA] OF 135-196</scope>
    <source>
        <tissue>Mammary carcinoma</tissue>
    </source>
</reference>
<reference key="7">
    <citation type="journal article" date="2005" name="Curr. Biol.">
        <title>SAK/PLK4 is required for centriole duplication and flagella development.</title>
        <authorList>
            <person name="Bettencourt-Dias M."/>
            <person name="Rodrigues-Martins A."/>
            <person name="Carpenter L."/>
            <person name="Riparbelli M."/>
            <person name="Lehmann L."/>
            <person name="Gatt M.K."/>
            <person name="Carmo N."/>
            <person name="Balloux F."/>
            <person name="Callaini G."/>
            <person name="Glover D.M."/>
        </authorList>
    </citation>
    <scope>FUNCTION</scope>
</reference>
<reference key="8">
    <citation type="journal article" date="2005" name="Nat. Cell Biol.">
        <title>The Polo kinase Plk4 functions in centriole duplication.</title>
        <authorList>
            <person name="Habedanck R."/>
            <person name="Stierhof Y.-D."/>
            <person name="Wilkinson C.J."/>
            <person name="Nigg E.A."/>
        </authorList>
    </citation>
    <scope>FUNCTION</scope>
    <scope>CATALYTIC ACTIVITY</scope>
    <scope>SUBCELLULAR LOCATION</scope>
    <scope>MUTAGENESIS OF ASP-154</scope>
</reference>
<reference key="9">
    <citation type="journal article" date="2005" name="Neoplasia">
        <title>SAK, a new polo-like kinase, is transcriptionally repressed by p53 and induces apoptosis upon RNAi silencing.</title>
        <authorList>
            <person name="Li J."/>
            <person name="Tan M."/>
            <person name="Li L."/>
            <person name="Pamarthy D."/>
            <person name="Lawrence T.S."/>
            <person name="Sun Y."/>
        </authorList>
    </citation>
    <scope>INDUCTION BY TP53</scope>
</reference>
<reference key="10">
    <citation type="journal article" date="2007" name="Dev. Cell">
        <title>Plk4-induced centriole biogenesis in human cells.</title>
        <authorList>
            <person name="Kleylein-Sohn J."/>
            <person name="Westendorf J."/>
            <person name="Le Clech M."/>
            <person name="Habedanck R."/>
            <person name="Stierhof Y.-D."/>
            <person name="Nigg E.A."/>
        </authorList>
    </citation>
    <scope>FUNCTION</scope>
    <scope>SUBCELLULAR LOCATION</scope>
</reference>
<reference key="11">
    <citation type="journal article" date="2008" name="Cell Cycle">
        <title>Human Plk4 phosphorylates Cdc25C.</title>
        <authorList>
            <person name="Bonni S."/>
            <person name="Ganuelas M.L."/>
            <person name="Petrinac S."/>
            <person name="Hudson J.W."/>
        </authorList>
    </citation>
    <scope>FUNCTION</scope>
    <scope>CATALYTIC ACTIVITY</scope>
    <scope>MUTAGENESIS OF LYS-41 AND THR-170</scope>
</reference>
<reference key="12">
    <citation type="journal article" date="2008" name="Mol. Cell">
        <title>Kinase-selective enrichment enables quantitative phosphoproteomics of the kinome across the cell cycle.</title>
        <authorList>
            <person name="Daub H."/>
            <person name="Olsen J.V."/>
            <person name="Bairlein M."/>
            <person name="Gnad F."/>
            <person name="Oppermann F.S."/>
            <person name="Korner R."/>
            <person name="Greff Z."/>
            <person name="Keri G."/>
            <person name="Stemmann O."/>
            <person name="Mann M."/>
        </authorList>
    </citation>
    <scope>PHOSPHORYLATION [LARGE SCALE ANALYSIS] AT SER-401</scope>
    <scope>IDENTIFICATION BY MASS SPECTROMETRY [LARGE SCALE ANALYSIS]</scope>
    <source>
        <tissue>Cervix carcinoma</tissue>
    </source>
</reference>
<reference key="13">
    <citation type="journal article" date="2008" name="Proc. Natl. Acad. Sci. U.S.A.">
        <title>A quantitative atlas of mitotic phosphorylation.</title>
        <authorList>
            <person name="Dephoure N."/>
            <person name="Zhou C."/>
            <person name="Villen J."/>
            <person name="Beausoleil S.A."/>
            <person name="Bakalarski C.E."/>
            <person name="Elledge S.J."/>
            <person name="Gygi S.P."/>
        </authorList>
    </citation>
    <scope>IDENTIFICATION BY MASS SPECTROMETRY [LARGE SCALE ANALYSIS]</scope>
    <source>
        <tissue>Cervix carcinoma</tissue>
    </source>
</reference>
<reference key="14">
    <citation type="journal article" date="2009" name="Cell Cycle">
        <title>Polo-like kinase 4 phosphorylates Chk2.</title>
        <authorList>
            <person name="Petrinac S."/>
            <person name="Ganuelas M.L."/>
            <person name="Bonni S."/>
            <person name="Nantais J."/>
            <person name="Hudson J.W."/>
        </authorList>
    </citation>
    <scope>FUNCTION</scope>
    <scope>CATALYTIC ACTIVITY</scope>
    <scope>MUTAGENESIS OF LYS-41 AND THR-170</scope>
</reference>
<reference key="15">
    <citation type="journal article" date="2009" name="J. Cell Sci.">
        <title>Gamma-tubulin-containing abnormal centrioles are induced by insufficient Plk4 in human HCT116 colorectal cancer cells.</title>
        <authorList>
            <person name="Kuriyama R."/>
            <person name="Bettencourt-Dias M."/>
            <person name="Hoffmann I."/>
            <person name="Arnold M."/>
            <person name="Sandvig L."/>
        </authorList>
    </citation>
    <scope>INDUCTION</scope>
</reference>
<reference key="16">
    <citation type="journal article" date="2009" name="Mol. Cell. Proteomics">
        <title>Large-scale proteomics analysis of the human kinome.</title>
        <authorList>
            <person name="Oppermann F.S."/>
            <person name="Gnad F."/>
            <person name="Olsen J.V."/>
            <person name="Hornberger R."/>
            <person name="Greff Z."/>
            <person name="Keri G."/>
            <person name="Mann M."/>
            <person name="Daub H."/>
        </authorList>
    </citation>
    <scope>PHOSPHORYLATION [LARGE SCALE ANALYSIS] AT SER-401 AND SER-817</scope>
    <scope>IDENTIFICATION BY MASS SPECTROMETRY [LARGE SCALE ANALYSIS]</scope>
</reference>
<reference key="17">
    <citation type="journal article" date="2010" name="J. Cell Biol.">
        <title>Cep152 acts as a scaffold for recruitment of Plk4 and CPAP to the centrosome.</title>
        <authorList>
            <person name="Cizmecioglu O."/>
            <person name="Arnold M."/>
            <person name="Bahtz R."/>
            <person name="Settele F."/>
            <person name="Ehret L."/>
            <person name="Haselmann-Weiss U."/>
            <person name="Antony C."/>
            <person name="Hoffmann I."/>
        </authorList>
    </citation>
    <scope>INTERACTION WITH CEP152</scope>
</reference>
<reference key="18">
    <citation type="journal article" date="2010" name="Nature">
        <title>Asterless is a scaffold for the onset of centriole assembly.</title>
        <authorList>
            <person name="Dzhindzhev N.S."/>
            <person name="Yu Q.D."/>
            <person name="Weiskopf K."/>
            <person name="Tzolovsky G."/>
            <person name="Cunha-Ferreira I."/>
            <person name="Riparbelli M."/>
            <person name="Rodrigues-Martins A."/>
            <person name="Bettencourt-Dias M."/>
            <person name="Callaini G."/>
            <person name="Glover D.M."/>
        </authorList>
    </citation>
    <scope>INTERACTION WITH CEP152</scope>
</reference>
<reference key="19">
    <citation type="journal article" date="2011" name="EMBO J.">
        <title>The human microcephaly protein STIL interacts with CPAP and is required for procentriole formation.</title>
        <authorList>
            <person name="Tang C.J."/>
            <person name="Lin S.Y."/>
            <person name="Hsu W.B."/>
            <person name="Lin Y.N."/>
            <person name="Wu C.T."/>
            <person name="Lin Y.C."/>
            <person name="Chang C.W."/>
            <person name="Wu K.S."/>
            <person name="Tang T.K."/>
        </authorList>
    </citation>
    <scope>FUNCTION</scope>
    <scope>SUBCELLULAR LOCATION</scope>
</reference>
<reference key="20">
    <citation type="journal article" date="2011" name="Nat. Cell Biol.">
        <title>The SCF-FBXW5 E3-ubiquitin ligase is regulated by PLK4 and targets HsSAS-6 to control centrosome duplication.</title>
        <authorList>
            <person name="Puklowski A."/>
            <person name="Homsi Y."/>
            <person name="Keller D."/>
            <person name="May M."/>
            <person name="Chauhan S."/>
            <person name="Kossatz U."/>
            <person name="Grunwald V."/>
            <person name="Kubicka S."/>
            <person name="Pich A."/>
            <person name="Manns M.P."/>
            <person name="Hoffmann I."/>
            <person name="Gonczy P."/>
            <person name="Malek N.P."/>
        </authorList>
    </citation>
    <scope>FUNCTION IN PHOSPHORYLATION OF FBXW5</scope>
</reference>
<reference key="21">
    <citation type="journal article" date="2013" name="J. Proteome Res.">
        <title>Toward a comprehensive characterization of a human cancer cell phosphoproteome.</title>
        <authorList>
            <person name="Zhou H."/>
            <person name="Di Palma S."/>
            <person name="Preisinger C."/>
            <person name="Peng M."/>
            <person name="Polat A.N."/>
            <person name="Heck A.J."/>
            <person name="Mohammed S."/>
        </authorList>
    </citation>
    <scope>PHOSPHORYLATION [LARGE SCALE ANALYSIS] AT SER-665</scope>
    <scope>IDENTIFICATION BY MASS SPECTROMETRY [LARGE SCALE ANALYSIS]</scope>
    <source>
        <tissue>Erythroleukemia</tissue>
    </source>
</reference>
<reference key="22">
    <citation type="journal article" date="2014" name="Nat. Genet.">
        <title>Mutations in PLK4, encoding a master regulator of centriole biogenesis, cause microcephaly, growth failure and retinopathy.</title>
        <authorList>
            <person name="Martin C.A."/>
            <person name="Ahmad I."/>
            <person name="Klingseisen A."/>
            <person name="Hussain M.S."/>
            <person name="Bicknell L.S."/>
            <person name="Leitch A."/>
            <person name="Nuernberg G."/>
            <person name="Toliat M.R."/>
            <person name="Murray J.E."/>
            <person name="Hunt D."/>
            <person name="Khan F."/>
            <person name="Ali Z."/>
            <person name="Tinschert S."/>
            <person name="Ding J."/>
            <person name="Keith C."/>
            <person name="Harley M.E."/>
            <person name="Heyn P."/>
            <person name="Mueller R."/>
            <person name="Hoffmann I."/>
            <person name="Daire V.C."/>
            <person name="Dollfus H."/>
            <person name="Dupuis L."/>
            <person name="Bashamboo A."/>
            <person name="McElreavey K."/>
            <person name="Kariminejad A."/>
            <person name="Mendoza-Londono R."/>
            <person name="Moore A.T."/>
            <person name="Saggar A."/>
            <person name="Schlechter C."/>
            <person name="Weleber R."/>
            <person name="Thiele H."/>
            <person name="Altmueller J."/>
            <person name="Hoehne W."/>
            <person name="Hurles M.E."/>
            <person name="Noegel A.A."/>
            <person name="Baig S.M."/>
            <person name="Nuernberg P."/>
            <person name="Jackson A.P."/>
        </authorList>
    </citation>
    <scope>INVOLVEMENT IN MCPHCR</scope>
</reference>
<reference key="23">
    <citation type="journal article" date="2016" name="J. Cell Sci.">
        <title>Cep78 is a new centriolar protein involved in Plk4-induced centriole overduplication.</title>
        <authorList>
            <person name="Brunk K."/>
            <person name="Zhu M."/>
            <person name="Baerenz F."/>
            <person name="Kratz A.S."/>
            <person name="Haselmann-Weiss U."/>
            <person name="Antony C."/>
            <person name="Hoffmann I."/>
        </authorList>
    </citation>
    <scope>INTERACTION WITH CEP78</scope>
    <scope>SUBCELLULAR LOCATION</scope>
</reference>
<reference key="24">
    <citation type="journal article" date="2016" name="Nat. Commun.">
        <title>KAT2A/KAT2B-targeted acetylome reveals a role for PLK4 acetylation in preventing centrosome amplification.</title>
        <authorList>
            <person name="Fournier M."/>
            <person name="Orpinell M."/>
            <person name="Grauffel C."/>
            <person name="Scheer E."/>
            <person name="Garnier J.M."/>
            <person name="Ye T."/>
            <person name="Chavant V."/>
            <person name="Joint M."/>
            <person name="Esashi F."/>
            <person name="Dejaegere A."/>
            <person name="Goenczy P."/>
            <person name="Tora L."/>
        </authorList>
    </citation>
    <scope>FUNCTION</scope>
    <scope>SUBCELLULAR LOCATION</scope>
    <scope>ACETYLATION AT LYS-45 AND LYS-46</scope>
</reference>
<reference key="25">
    <citation type="journal article" date="2019" name="J. Biol. Chem.">
        <title>Polo-like kinase 4 maintains centriolar satellite integrity by phosphorylation of centrosomal protein 131 (CEP131).</title>
        <authorList>
            <person name="Denu R.A."/>
            <person name="Sass M.M."/>
            <person name="Johnson J.M."/>
            <person name="Potts G.K."/>
            <person name="Choudhary A."/>
            <person name="Coon J.J."/>
            <person name="Burkard M.E."/>
        </authorList>
    </citation>
    <scope>FUNCTION</scope>
    <scope>INTERACTION WITH CEP131</scope>
    <scope>SUBCELLULAR LOCATION</scope>
</reference>
<reference key="26">
    <citation type="journal article" date="2020" name="J. Cell Sci.">
        <title>Direct interaction between CEP85 and STIL mediates PLK4-driven directed cell migration.</title>
        <authorList>
            <person name="Liu Y."/>
            <person name="Kim J."/>
            <person name="Philip R."/>
            <person name="Sridhar V."/>
            <person name="Chandrashekhar M."/>
            <person name="Moffat J."/>
            <person name="van Breugel M."/>
            <person name="Pelletier L."/>
        </authorList>
    </citation>
    <scope>INTERACTION WITH CEP85</scope>
</reference>
<reference key="27">
    <citation type="journal article" date="2023" name="IScience">
        <title>Centrosomal protein 120 promotes centrosome amplification and gastric cancer progression via USP54-mediated deubiquitination of PLK4.</title>
        <authorList>
            <person name="Zhang C."/>
            <person name="Ma X."/>
            <person name="Wei G."/>
            <person name="Zhu X."/>
            <person name="Hu P."/>
            <person name="Chen X."/>
            <person name="Wang D."/>
            <person name="Li Y."/>
            <person name="Ruan T."/>
            <person name="Zhang W."/>
            <person name="Tao K."/>
            <person name="Wu C."/>
        </authorList>
    </citation>
    <scope>DEUBIQUITINATION BY USP54</scope>
    <scope>MUTAGENESIS OF LYS-13; LYS-151; LYS-162 AND LYS-167</scope>
</reference>
<reference evidence="32 33 34" key="28">
    <citation type="journal article" date="2020" name="Structure">
        <title>Structural and Functional Analyses of the FAM46C/Plk4 Complex.</title>
        <authorList>
            <person name="Chen H."/>
            <person name="Lu D."/>
            <person name="Shang G."/>
            <person name="Gao G."/>
            <person name="Zhang X."/>
        </authorList>
    </citation>
    <scope>X-RAY CRYSTALLOGRAPHY (2.85 ANGSTROMS) OF 585-807 IN COMPLEXES WITH TENT5C AND CEP192</scope>
    <scope>INTERACTION WITH TENT5C</scope>
    <scope>MUTAGENESIS OF ASN-669 AND ILE-670</scope>
    <scope>SUBCELLULAR LOCATION</scope>
</reference>
<reference key="29">
    <citation type="submission" date="2009-06" db="PDB data bank">
        <title>Crystal structure of PLK4 kinase.</title>
        <authorList>
            <consortium name="New York structural genomix research consortium (NYSGXRC)"/>
        </authorList>
    </citation>
    <scope>X-RAY CRYSTALLOGRAPHY (2.25 ANGSTROMS) OF 2-275</scope>
</reference>
<reference key="30">
    <citation type="journal article" date="2007" name="Nature">
        <title>Patterns of somatic mutation in human cancer genomes.</title>
        <authorList>
            <person name="Greenman C."/>
            <person name="Stephens P."/>
            <person name="Smith R."/>
            <person name="Dalgliesh G.L."/>
            <person name="Hunter C."/>
            <person name="Bignell G."/>
            <person name="Davies H."/>
            <person name="Teague J."/>
            <person name="Butler A."/>
            <person name="Stevens C."/>
            <person name="Edkins S."/>
            <person name="O'Meara S."/>
            <person name="Vastrik I."/>
            <person name="Schmidt E.E."/>
            <person name="Avis T."/>
            <person name="Barthorpe S."/>
            <person name="Bhamra G."/>
            <person name="Buck G."/>
            <person name="Choudhury B."/>
            <person name="Clements J."/>
            <person name="Cole J."/>
            <person name="Dicks E."/>
            <person name="Forbes S."/>
            <person name="Gray K."/>
            <person name="Halliday K."/>
            <person name="Harrison R."/>
            <person name="Hills K."/>
            <person name="Hinton J."/>
            <person name="Jenkinson A."/>
            <person name="Jones D."/>
            <person name="Menzies A."/>
            <person name="Mironenko T."/>
            <person name="Perry J."/>
            <person name="Raine K."/>
            <person name="Richardson D."/>
            <person name="Shepherd R."/>
            <person name="Small A."/>
            <person name="Tofts C."/>
            <person name="Varian J."/>
            <person name="Webb T."/>
            <person name="West S."/>
            <person name="Widaa S."/>
            <person name="Yates A."/>
            <person name="Cahill D.P."/>
            <person name="Louis D.N."/>
            <person name="Goldstraw P."/>
            <person name="Nicholson A.G."/>
            <person name="Brasseur F."/>
            <person name="Looijenga L."/>
            <person name="Weber B.L."/>
            <person name="Chiew Y.-E."/>
            <person name="DeFazio A."/>
            <person name="Greaves M.F."/>
            <person name="Green A.R."/>
            <person name="Campbell P."/>
            <person name="Birney E."/>
            <person name="Easton D.F."/>
            <person name="Chenevix-Trench G."/>
            <person name="Tan M.-H."/>
            <person name="Khoo S.K."/>
            <person name="Teh B.T."/>
            <person name="Yuen S.T."/>
            <person name="Leung S.Y."/>
            <person name="Wooster R."/>
            <person name="Futreal P.A."/>
            <person name="Stratton M.R."/>
        </authorList>
    </citation>
    <scope>VARIANTS [LARGE SCALE ANALYSIS] CYS-86; HIS-146; THR-226; THR-232; LEU-317; ASP-449; SER-519 AND ASP-830</scope>
</reference>
<organism>
    <name type="scientific">Homo sapiens</name>
    <name type="common">Human</name>
    <dbReference type="NCBI Taxonomy" id="9606"/>
    <lineage>
        <taxon>Eukaryota</taxon>
        <taxon>Metazoa</taxon>
        <taxon>Chordata</taxon>
        <taxon>Craniata</taxon>
        <taxon>Vertebrata</taxon>
        <taxon>Euteleostomi</taxon>
        <taxon>Mammalia</taxon>
        <taxon>Eutheria</taxon>
        <taxon>Euarchontoglires</taxon>
        <taxon>Primates</taxon>
        <taxon>Haplorrhini</taxon>
        <taxon>Catarrhini</taxon>
        <taxon>Hominidae</taxon>
        <taxon>Homo</taxon>
    </lineage>
</organism>
<protein>
    <recommendedName>
        <fullName evidence="30">Serine/threonine-protein kinase PLK4</fullName>
        <ecNumber evidence="10 14 15">2.7.11.21</ecNumber>
    </recommendedName>
    <alternativeName>
        <fullName>Polo-like kinase 4</fullName>
        <shortName>PLK-4</shortName>
    </alternativeName>
    <alternativeName>
        <fullName>Serine/threonine-protein kinase 18</fullName>
    </alternativeName>
    <alternativeName>
        <fullName>Serine/threonine-protein kinase Sak</fullName>
    </alternativeName>
</protein>
<evidence type="ECO:0000250" key="1">
    <source>
        <dbReference type="UniProtKB" id="Q64702"/>
    </source>
</evidence>
<evidence type="ECO:0000255" key="2">
    <source>
        <dbReference type="PROSITE-ProRule" id="PRU00154"/>
    </source>
</evidence>
<evidence type="ECO:0000255" key="3">
    <source>
        <dbReference type="PROSITE-ProRule" id="PRU00159"/>
    </source>
</evidence>
<evidence type="ECO:0000255" key="4">
    <source>
        <dbReference type="PROSITE-ProRule" id="PRU01328"/>
    </source>
</evidence>
<evidence type="ECO:0000255" key="5">
    <source>
        <dbReference type="PROSITE-ProRule" id="PRU01329"/>
    </source>
</evidence>
<evidence type="ECO:0000256" key="6">
    <source>
        <dbReference type="SAM" id="MobiDB-lite"/>
    </source>
</evidence>
<evidence type="ECO:0000269" key="7">
    <source>
    </source>
</evidence>
<evidence type="ECO:0000269" key="8">
    <source>
    </source>
</evidence>
<evidence type="ECO:0000269" key="9">
    <source>
    </source>
</evidence>
<evidence type="ECO:0000269" key="10">
    <source>
    </source>
</evidence>
<evidence type="ECO:0000269" key="11">
    <source>
    </source>
</evidence>
<evidence type="ECO:0000269" key="12">
    <source>
    </source>
</evidence>
<evidence type="ECO:0000269" key="13">
    <source>
    </source>
</evidence>
<evidence type="ECO:0000269" key="14">
    <source>
    </source>
</evidence>
<evidence type="ECO:0000269" key="15">
    <source>
    </source>
</evidence>
<evidence type="ECO:0000269" key="16">
    <source>
    </source>
</evidence>
<evidence type="ECO:0000269" key="17">
    <source>
    </source>
</evidence>
<evidence type="ECO:0000269" key="18">
    <source>
    </source>
</evidence>
<evidence type="ECO:0000269" key="19">
    <source>
    </source>
</evidence>
<evidence type="ECO:0000269" key="20">
    <source>
    </source>
</evidence>
<evidence type="ECO:0000269" key="21">
    <source>
    </source>
</evidence>
<evidence type="ECO:0000269" key="22">
    <source>
    </source>
</evidence>
<evidence type="ECO:0000269" key="23">
    <source>
    </source>
</evidence>
<evidence type="ECO:0000269" key="24">
    <source>
    </source>
</evidence>
<evidence type="ECO:0000269" key="25">
    <source>
    </source>
</evidence>
<evidence type="ECO:0000269" key="26">
    <source>
    </source>
</evidence>
<evidence type="ECO:0000269" key="27">
    <source>
    </source>
</evidence>
<evidence type="ECO:0000269" key="28">
    <source ref="1"/>
</evidence>
<evidence type="ECO:0000303" key="29">
    <source>
    </source>
</evidence>
<evidence type="ECO:0000305" key="30"/>
<evidence type="ECO:0000312" key="31">
    <source>
        <dbReference type="HGNC" id="HGNC:11397"/>
    </source>
</evidence>
<evidence type="ECO:0007744" key="32">
    <source>
        <dbReference type="PDB" id="6W38"/>
    </source>
</evidence>
<evidence type="ECO:0007744" key="33">
    <source>
        <dbReference type="PDB" id="6W3I"/>
    </source>
</evidence>
<evidence type="ECO:0007744" key="34">
    <source>
        <dbReference type="PDB" id="6W3J"/>
    </source>
</evidence>
<evidence type="ECO:0007744" key="35">
    <source>
    </source>
</evidence>
<evidence type="ECO:0007744" key="36">
    <source>
    </source>
</evidence>
<evidence type="ECO:0007744" key="37">
    <source>
    </source>
</evidence>
<evidence type="ECO:0007829" key="38">
    <source>
        <dbReference type="PDB" id="2N19"/>
    </source>
</evidence>
<evidence type="ECO:0007829" key="39">
    <source>
        <dbReference type="PDB" id="3COK"/>
    </source>
</evidence>
<evidence type="ECO:0007829" key="40">
    <source>
        <dbReference type="PDB" id="4JXF"/>
    </source>
</evidence>
<evidence type="ECO:0007829" key="41">
    <source>
        <dbReference type="PDB" id="4N9J"/>
    </source>
</evidence>
<evidence type="ECO:0007829" key="42">
    <source>
        <dbReference type="PDB" id="5LHZ"/>
    </source>
</evidence>
<gene>
    <name evidence="31" type="primary">PLK4</name>
    <name type="synonym">SAK</name>
    <name type="synonym">STK18</name>
</gene>
<comment type="function">
    <text evidence="10 11 13 14 15 19 20 23 24">Serine/threonine-protein kinase that plays a central role in centriole duplication. Able to trigger procentriole formation on the surface of the parental centriole cylinder, leading to the recruitment of centriole biogenesis proteins such as SASS6, CPAP, CCP110, CEP135 and gamma-tubulin. When overexpressed, it is able to induce centrosome amplification through the simultaneous generation of multiple procentrioles adjoining each parental centriole during S phase. Phosphorylates 'Ser-151' of FBXW5 during the G1/S transition, leading to inhibit FBXW5 ability to ubiquitinate SASS6. Its central role in centriole replication suggests a possible role in tumorigenesis, centrosome aberrations being frequently observed in tumors. Also involved in deuterosome-mediated centriole amplification in multiciliated that can generate more than 100 centrioles. Also involved in trophoblast differentiation by phosphorylating HAND1, leading to disrupt the interaction between HAND1 and MDFIC and activate HAND1. Phosphorylates CDC25C and CHEK2. Required for the recruitment of STIL to the centriole and for STIL-mediated centriole amplification (PubMed:22020124). Phosphorylates CEP131 at 'Ser-78' and PCM1 at 'Ser-372' which is essential for proper organization and integrity of centriolar satellites (PubMed:30804208).</text>
</comment>
<comment type="catalytic activity">
    <reaction evidence="10 14 15">
        <text>L-seryl-[protein] + ATP = O-phospho-L-seryl-[protein] + ADP + H(+)</text>
        <dbReference type="Rhea" id="RHEA:17989"/>
        <dbReference type="Rhea" id="RHEA-COMP:9863"/>
        <dbReference type="Rhea" id="RHEA-COMP:11604"/>
        <dbReference type="ChEBI" id="CHEBI:15378"/>
        <dbReference type="ChEBI" id="CHEBI:29999"/>
        <dbReference type="ChEBI" id="CHEBI:30616"/>
        <dbReference type="ChEBI" id="CHEBI:83421"/>
        <dbReference type="ChEBI" id="CHEBI:456216"/>
        <dbReference type="EC" id="2.7.11.21"/>
    </reaction>
</comment>
<comment type="catalytic activity">
    <reaction evidence="10 14 15">
        <text>L-threonyl-[protein] + ATP = O-phospho-L-threonyl-[protein] + ADP + H(+)</text>
        <dbReference type="Rhea" id="RHEA:46608"/>
        <dbReference type="Rhea" id="RHEA-COMP:11060"/>
        <dbReference type="Rhea" id="RHEA-COMP:11605"/>
        <dbReference type="ChEBI" id="CHEBI:15378"/>
        <dbReference type="ChEBI" id="CHEBI:30013"/>
        <dbReference type="ChEBI" id="CHEBI:30616"/>
        <dbReference type="ChEBI" id="CHEBI:61977"/>
        <dbReference type="ChEBI" id="CHEBI:456216"/>
        <dbReference type="EC" id="2.7.11.21"/>
    </reaction>
</comment>
<comment type="subunit">
    <text evidence="1 17 18 22 24 25 26">Homodimer (By similarity). Interacts with CEP152 (via N-terminus). Interacts with CEP78; this interaction may be important for proper PLK4 localization to the centriole and PLK4-induced overduplication of centrioles (PubMed:27246242). Interacts with CEP131 (PubMed:30804208). Interacts simultaneously with TENT5C and CEP192 (PubMed:32433990). Interacts with TENT5C; this interaction leads to the TENT5C recruitment in the centrosome (PubMed:32433990). Interacts with CEP85; this interaction may be important in cell migration and centriole assembly (PubMed:32107292).</text>
</comment>
<comment type="interaction">
    <interactant intactId="EBI-746202">
        <id>O00444</id>
    </interactant>
    <interactant intactId="EBI-8643161">
        <id>Q9NX04</id>
        <label>AIRIM</label>
    </interactant>
    <organismsDiffer>false</organismsDiffer>
    <experiments>3</experiments>
</comment>
<comment type="interaction">
    <interactant intactId="EBI-746202">
        <id>O00444</id>
    </interactant>
    <interactant intactId="EBI-718116">
        <id>P36575</id>
        <label>ARR3</label>
    </interactant>
    <organismsDiffer>false</organismsDiffer>
    <experiments>3</experiments>
</comment>
<comment type="interaction">
    <interactant intactId="EBI-746202">
        <id>O00444</id>
    </interactant>
    <interactant intactId="EBI-307461">
        <id>Q9Y297</id>
        <label>BTRC</label>
    </interactant>
    <organismsDiffer>false</organismsDiffer>
    <experiments>4</experiments>
</comment>
<comment type="interaction">
    <interactant intactId="EBI-746202">
        <id>O00444</id>
    </interactant>
    <interactant intactId="EBI-2561671">
        <id>A6NKD9</id>
        <label>CCDC85C</label>
    </interactant>
    <organismsDiffer>false</organismsDiffer>
    <experiments>2</experiments>
</comment>
<comment type="interaction">
    <interactant intactId="EBI-746202">
        <id>O00444</id>
    </interactant>
    <interactant intactId="EBI-311012">
        <id>O94986</id>
        <label>CEP152</label>
    </interactant>
    <organismsDiffer>false</organismsDiffer>
    <experiments>7</experiments>
</comment>
<comment type="interaction">
    <interactant intactId="EBI-746202">
        <id>O00444</id>
    </interactant>
    <interactant intactId="EBI-15878364">
        <id>O94986-3</id>
        <label>CEP152</label>
    </interactant>
    <organismsDiffer>false</organismsDiffer>
    <experiments>16</experiments>
</comment>
<comment type="interaction">
    <interactant intactId="EBI-746202">
        <id>O00444</id>
    </interactant>
    <interactant intactId="EBI-2339778">
        <id>Q8TEP8</id>
        <label>CEP192</label>
    </interactant>
    <organismsDiffer>false</organismsDiffer>
    <experiments>2</experiments>
</comment>
<comment type="interaction">
    <interactant intactId="EBI-746202">
        <id>O00444</id>
    </interactant>
    <interactant intactId="EBI-16111881">
        <id>Q8TEP8-3</id>
        <label>CEP192</label>
    </interactant>
    <organismsDiffer>false</organismsDiffer>
    <experiments>13</experiments>
</comment>
<comment type="interaction">
    <interactant intactId="EBI-746202">
        <id>O00444</id>
    </interactant>
    <interactant intactId="EBI-11514233">
        <id>P59910</id>
        <label>DNAJB13</label>
    </interactant>
    <organismsDiffer>false</organismsDiffer>
    <experiments>3</experiments>
</comment>
<comment type="interaction">
    <interactant intactId="EBI-746202">
        <id>O00444</id>
    </interactant>
    <interactant intactId="EBI-1054039">
        <id>Q9H8V3</id>
        <label>ECT2</label>
    </interactant>
    <organismsDiffer>false</organismsDiffer>
    <experiments>3</experiments>
</comment>
<comment type="interaction">
    <interactant intactId="EBI-746202">
        <id>O00444</id>
    </interactant>
    <interactant intactId="EBI-742350">
        <id>Q14241</id>
        <label>ELOA</label>
    </interactant>
    <organismsDiffer>false</organismsDiffer>
    <experiments>6</experiments>
</comment>
<comment type="interaction">
    <interactant intactId="EBI-746202">
        <id>O00444</id>
    </interactant>
    <interactant intactId="EBI-1052570">
        <id>O95995</id>
        <label>GAS8</label>
    </interactant>
    <organismsDiffer>false</organismsDiffer>
    <experiments>3</experiments>
</comment>
<comment type="interaction">
    <interactant intactId="EBI-746202">
        <id>O00444</id>
    </interactant>
    <interactant intactId="EBI-1051317">
        <id>Q9H4L5</id>
        <label>OSBPL3</label>
    </interactant>
    <organismsDiffer>false</organismsDiffer>
    <experiments>3</experiments>
</comment>
<comment type="interaction">
    <interactant intactId="EBI-746202">
        <id>O00444</id>
    </interactant>
    <interactant intactId="EBI-395883">
        <id>P07237</id>
        <label>P4HB</label>
    </interactant>
    <organismsDiffer>false</organismsDiffer>
    <experiments>3</experiments>
</comment>
<comment type="interaction">
    <interactant intactId="EBI-746202">
        <id>O00444</id>
    </interactant>
    <interactant intactId="EBI-746202">
        <id>O00444</id>
        <label>PLK4</label>
    </interactant>
    <organismsDiffer>false</organismsDiffer>
    <experiments>10</experiments>
</comment>
<comment type="interaction">
    <interactant intactId="EBI-746202">
        <id>O00444</id>
    </interactant>
    <interactant intactId="EBI-476295">
        <id>P31947</id>
        <label>SFN</label>
    </interactant>
    <organismsDiffer>false</organismsDiffer>
    <experiments>3</experiments>
</comment>
<comment type="interaction">
    <interactant intactId="EBI-746202">
        <id>O00444</id>
    </interactant>
    <interactant intactId="EBI-413317">
        <id>Q96R06</id>
        <label>SPAG5</label>
    </interactant>
    <organismsDiffer>false</organismsDiffer>
    <experiments>3</experiments>
</comment>
<comment type="interaction">
    <interactant intactId="EBI-746202">
        <id>O00444</id>
    </interactant>
    <interactant intactId="EBI-7488405">
        <id>Q15468</id>
        <label>STIL</label>
    </interactant>
    <organismsDiffer>false</organismsDiffer>
    <experiments>11</experiments>
</comment>
<comment type="interaction">
    <interactant intactId="EBI-746202">
        <id>O00444</id>
    </interactant>
    <interactant intactId="EBI-752030">
        <id>Q96A09</id>
        <label>TENT5B</label>
    </interactant>
    <organismsDiffer>false</organismsDiffer>
    <experiments>3</experiments>
</comment>
<comment type="interaction">
    <interactant intactId="EBI-746202">
        <id>O00444</id>
    </interactant>
    <interactant intactId="EBI-1105213">
        <id>Q9UBB9</id>
        <label>TFIP11</label>
    </interactant>
    <organismsDiffer>false</organismsDiffer>
    <experiments>3</experiments>
</comment>
<comment type="interaction">
    <interactant intactId="EBI-746202">
        <id>O00444</id>
    </interactant>
    <interactant intactId="EBI-2130429">
        <id>Q9BYV2</id>
        <label>TRIM54</label>
    </interactant>
    <organismsDiffer>false</organismsDiffer>
    <experiments>3</experiments>
</comment>
<comment type="interaction">
    <interactant intactId="EBI-746202">
        <id>O00444</id>
    </interactant>
    <interactant intactId="EBI-356498">
        <id>P62258</id>
        <label>YWHAE</label>
    </interactant>
    <organismsDiffer>false</organismsDiffer>
    <experiments>3</experiments>
</comment>
<comment type="interaction">
    <interactant intactId="EBI-746202">
        <id>O00444</id>
    </interactant>
    <interactant intactId="EBI-306940">
        <id>Q04917</id>
        <label>YWHAH</label>
    </interactant>
    <organismsDiffer>false</organismsDiffer>
    <experiments>2</experiments>
</comment>
<comment type="interaction">
    <interactant intactId="EBI-746202">
        <id>O00444</id>
    </interactant>
    <interactant intactId="EBI-9995672">
        <id>O15060</id>
        <label>ZBTB39</label>
    </interactant>
    <organismsDiffer>false</organismsDiffer>
    <experiments>3</experiments>
</comment>
<comment type="subcellular location">
    <subcellularLocation>
        <location evidence="20 22 23">Cytoplasm</location>
        <location evidence="20 22 23">Cytoskeleton</location>
        <location evidence="20 22 23">Microtubule organizing center</location>
        <location evidence="20 22 23">Centrosome</location>
        <location evidence="20 22 23">Centriole</location>
    </subcellularLocation>
    <subcellularLocation>
        <location evidence="1">Nucleus</location>
        <location evidence="1">Nucleolus</location>
    </subcellularLocation>
    <subcellularLocation>
        <location evidence="1">Cleavage furrow</location>
    </subcellularLocation>
    <subcellularLocation>
        <location evidence="24 26">Cytoplasm</location>
        <location evidence="24 26">Cytoskeleton</location>
        <location evidence="24 26">Microtubule organizing center</location>
        <location evidence="24 26">Centrosome</location>
    </subcellularLocation>
    <text>Component of the deuterosome, a structure that promotes de novo centriole amplification in multiciliated cells that can generate more than 100 centrioles. Associates with centrioles throughout the cell cycle. According to PubMed:16244668, it is not present at cleavage furrows.</text>
</comment>
<comment type="alternative products">
    <event type="alternative splicing"/>
    <isoform>
        <id>O00444-1</id>
        <name>1</name>
        <sequence type="displayed"/>
    </isoform>
    <isoform>
        <id>O00444-2</id>
        <name>2</name>
        <sequence type="described" ref="VSP_038117"/>
    </isoform>
    <isoform>
        <id>O00444-3</id>
        <name>3</name>
        <sequence type="described" ref="VSP_038116"/>
    </isoform>
</comment>
<comment type="induction">
    <text evidence="9 16">Down-regulated in HCT 116 colorectal cancer cells, leading to aberrant centrioles composed of disorganized cylindrical microtubules and displaced appendages. Down-regulated by p53/TP53.</text>
</comment>
<comment type="domain">
    <text evidence="26">Cryptic POLO box 1 (CPB1) and Cryptic POLO box 2 (CPB2) domains can simultaneously bind to both TENT5C and CEP192.</text>
</comment>
<comment type="PTM">
    <text evidence="23">Acetylation by KAT2A and KAT2B impairs kinase activity by shifting the kinase to an inactive conformation.</text>
</comment>
<comment type="PTM">
    <text evidence="1 27">Ubiquitinated; leading to its degradation by the proteasome (By similarity). Deubiquitinated by USP54; leading to PLK4 stabilization (PubMed:36590171).</text>
</comment>
<comment type="PTM">
    <text evidence="7">Tyrosine-phosphorylated by TEC.</text>
</comment>
<comment type="disease" evidence="21">
    <disease id="DI-04299">
        <name>Microcephaly and chorioretinopathy, autosomal recessive, 2</name>
        <acronym>MCCRP2</acronym>
        <description>A severe disorder characterized by microcephaly, delayed psychomotor development, growth retardation with dwarfism, and ocular abnormalities.</description>
        <dbReference type="MIM" id="616171"/>
    </disease>
    <text>The disease is caused by variants affecting the gene represented in this entry.</text>
</comment>
<comment type="similarity">
    <text evidence="3 4 5">Belongs to the protein kinase superfamily. Ser/Thr protein kinase family. CDC5/Polo subfamily.</text>
</comment>